<proteinExistence type="inferred from homology"/>
<name>RL13_ACTP7</name>
<sequence length="142" mass="16052">MKTFVAKPETVKRDWYVVDATGKTLGRLATELARRLRGKHKAEYTPHVDTGDYIIVINAEKVAVTGKKETDKIYYWHTGYVGGIKDATFKEMIARRPEAVIEIAVKGMLPKGPLGREMFRKLKVYAGNEHNHAAQQPQVLDI</sequence>
<reference key="1">
    <citation type="submission" date="2008-06" db="EMBL/GenBank/DDBJ databases">
        <title>Genome and proteome analysis of A. pleuropneumoniae serotype 7.</title>
        <authorList>
            <person name="Linke B."/>
            <person name="Buettner F."/>
            <person name="Martinez-Arias R."/>
            <person name="Goesmann A."/>
            <person name="Baltes N."/>
            <person name="Tegetmeyer H."/>
            <person name="Singh M."/>
            <person name="Gerlach G.F."/>
        </authorList>
    </citation>
    <scope>NUCLEOTIDE SEQUENCE [LARGE SCALE GENOMIC DNA]</scope>
    <source>
        <strain>AP76</strain>
    </source>
</reference>
<evidence type="ECO:0000255" key="1">
    <source>
        <dbReference type="HAMAP-Rule" id="MF_01366"/>
    </source>
</evidence>
<evidence type="ECO:0000305" key="2"/>
<dbReference type="EMBL" id="CP001091">
    <property type="protein sequence ID" value="ACE61298.1"/>
    <property type="molecule type" value="Genomic_DNA"/>
</dbReference>
<dbReference type="RefSeq" id="WP_005596850.1">
    <property type="nucleotide sequence ID" value="NC_010939.1"/>
</dbReference>
<dbReference type="SMR" id="B3H129"/>
<dbReference type="GeneID" id="92742690"/>
<dbReference type="KEGG" id="apa:APP7_0646"/>
<dbReference type="HOGENOM" id="CLU_082184_2_2_6"/>
<dbReference type="Proteomes" id="UP000001226">
    <property type="component" value="Chromosome"/>
</dbReference>
<dbReference type="GO" id="GO:0022625">
    <property type="term" value="C:cytosolic large ribosomal subunit"/>
    <property type="evidence" value="ECO:0007669"/>
    <property type="project" value="TreeGrafter"/>
</dbReference>
<dbReference type="GO" id="GO:0003729">
    <property type="term" value="F:mRNA binding"/>
    <property type="evidence" value="ECO:0007669"/>
    <property type="project" value="TreeGrafter"/>
</dbReference>
<dbReference type="GO" id="GO:0003735">
    <property type="term" value="F:structural constituent of ribosome"/>
    <property type="evidence" value="ECO:0007669"/>
    <property type="project" value="InterPro"/>
</dbReference>
<dbReference type="GO" id="GO:0017148">
    <property type="term" value="P:negative regulation of translation"/>
    <property type="evidence" value="ECO:0007669"/>
    <property type="project" value="TreeGrafter"/>
</dbReference>
<dbReference type="GO" id="GO:0006412">
    <property type="term" value="P:translation"/>
    <property type="evidence" value="ECO:0007669"/>
    <property type="project" value="UniProtKB-UniRule"/>
</dbReference>
<dbReference type="CDD" id="cd00392">
    <property type="entry name" value="Ribosomal_L13"/>
    <property type="match status" value="1"/>
</dbReference>
<dbReference type="FunFam" id="3.90.1180.10:FF:000001">
    <property type="entry name" value="50S ribosomal protein L13"/>
    <property type="match status" value="1"/>
</dbReference>
<dbReference type="Gene3D" id="3.90.1180.10">
    <property type="entry name" value="Ribosomal protein L13"/>
    <property type="match status" value="1"/>
</dbReference>
<dbReference type="HAMAP" id="MF_01366">
    <property type="entry name" value="Ribosomal_uL13"/>
    <property type="match status" value="1"/>
</dbReference>
<dbReference type="InterPro" id="IPR005822">
    <property type="entry name" value="Ribosomal_uL13"/>
</dbReference>
<dbReference type="InterPro" id="IPR005823">
    <property type="entry name" value="Ribosomal_uL13_bac-type"/>
</dbReference>
<dbReference type="InterPro" id="IPR023563">
    <property type="entry name" value="Ribosomal_uL13_CS"/>
</dbReference>
<dbReference type="InterPro" id="IPR036899">
    <property type="entry name" value="Ribosomal_uL13_sf"/>
</dbReference>
<dbReference type="NCBIfam" id="TIGR01066">
    <property type="entry name" value="rplM_bact"/>
    <property type="match status" value="1"/>
</dbReference>
<dbReference type="PANTHER" id="PTHR11545:SF2">
    <property type="entry name" value="LARGE RIBOSOMAL SUBUNIT PROTEIN UL13M"/>
    <property type="match status" value="1"/>
</dbReference>
<dbReference type="PANTHER" id="PTHR11545">
    <property type="entry name" value="RIBOSOMAL PROTEIN L13"/>
    <property type="match status" value="1"/>
</dbReference>
<dbReference type="Pfam" id="PF00572">
    <property type="entry name" value="Ribosomal_L13"/>
    <property type="match status" value="1"/>
</dbReference>
<dbReference type="PIRSF" id="PIRSF002181">
    <property type="entry name" value="Ribosomal_L13"/>
    <property type="match status" value="1"/>
</dbReference>
<dbReference type="SUPFAM" id="SSF52161">
    <property type="entry name" value="Ribosomal protein L13"/>
    <property type="match status" value="1"/>
</dbReference>
<dbReference type="PROSITE" id="PS00783">
    <property type="entry name" value="RIBOSOMAL_L13"/>
    <property type="match status" value="1"/>
</dbReference>
<keyword id="KW-0687">Ribonucleoprotein</keyword>
<keyword id="KW-0689">Ribosomal protein</keyword>
<comment type="function">
    <text evidence="1">This protein is one of the early assembly proteins of the 50S ribosomal subunit, although it is not seen to bind rRNA by itself. It is important during the early stages of 50S assembly.</text>
</comment>
<comment type="subunit">
    <text evidence="1">Part of the 50S ribosomal subunit.</text>
</comment>
<comment type="similarity">
    <text evidence="1">Belongs to the universal ribosomal protein uL13 family.</text>
</comment>
<gene>
    <name evidence="1" type="primary">rplM</name>
    <name type="ordered locus">APP7_0646</name>
</gene>
<protein>
    <recommendedName>
        <fullName evidence="1">Large ribosomal subunit protein uL13</fullName>
    </recommendedName>
    <alternativeName>
        <fullName evidence="2">50S ribosomal protein L13</fullName>
    </alternativeName>
</protein>
<accession>B3H129</accession>
<organism>
    <name type="scientific">Actinobacillus pleuropneumoniae serotype 7 (strain AP76)</name>
    <dbReference type="NCBI Taxonomy" id="537457"/>
    <lineage>
        <taxon>Bacteria</taxon>
        <taxon>Pseudomonadati</taxon>
        <taxon>Pseudomonadota</taxon>
        <taxon>Gammaproteobacteria</taxon>
        <taxon>Pasteurellales</taxon>
        <taxon>Pasteurellaceae</taxon>
        <taxon>Actinobacillus</taxon>
    </lineage>
</organism>
<feature type="chain" id="PRO_1000144082" description="Large ribosomal subunit protein uL13">
    <location>
        <begin position="1"/>
        <end position="142"/>
    </location>
</feature>